<proteinExistence type="inferred from homology"/>
<protein>
    <recommendedName>
        <fullName evidence="1">Large ribosomal subunit protein uL6</fullName>
    </recommendedName>
    <alternativeName>
        <fullName evidence="2">50S ribosomal protein L6</fullName>
    </alternativeName>
</protein>
<reference key="1">
    <citation type="journal article" date="2005" name="PLoS Biol.">
        <title>Major structural differences and novel potential virulence mechanisms from the genomes of multiple Campylobacter species.</title>
        <authorList>
            <person name="Fouts D.E."/>
            <person name="Mongodin E.F."/>
            <person name="Mandrell R.E."/>
            <person name="Miller W.G."/>
            <person name="Rasko D.A."/>
            <person name="Ravel J."/>
            <person name="Brinkac L.M."/>
            <person name="DeBoy R.T."/>
            <person name="Parker C.T."/>
            <person name="Daugherty S.C."/>
            <person name="Dodson R.J."/>
            <person name="Durkin A.S."/>
            <person name="Madupu R."/>
            <person name="Sullivan S.A."/>
            <person name="Shetty J.U."/>
            <person name="Ayodeji M.A."/>
            <person name="Shvartsbeyn A."/>
            <person name="Schatz M.C."/>
            <person name="Badger J.H."/>
            <person name="Fraser C.M."/>
            <person name="Nelson K.E."/>
        </authorList>
    </citation>
    <scope>NUCLEOTIDE SEQUENCE [LARGE SCALE GENOMIC DNA]</scope>
    <source>
        <strain>RM1221</strain>
    </source>
</reference>
<feature type="chain" id="PRO_0000265238" description="Large ribosomal subunit protein uL6">
    <location>
        <begin position="1"/>
        <end position="178"/>
    </location>
</feature>
<dbReference type="EMBL" id="CP000025">
    <property type="protein sequence ID" value="AAW36282.1"/>
    <property type="molecule type" value="Genomic_DNA"/>
</dbReference>
<dbReference type="RefSeq" id="WP_002851302.1">
    <property type="nucleotide sequence ID" value="NC_003912.7"/>
</dbReference>
<dbReference type="SMR" id="Q5HSA5"/>
<dbReference type="KEGG" id="cjr:CJE1860"/>
<dbReference type="HOGENOM" id="CLU_065464_1_2_7"/>
<dbReference type="GO" id="GO:0022625">
    <property type="term" value="C:cytosolic large ribosomal subunit"/>
    <property type="evidence" value="ECO:0007669"/>
    <property type="project" value="TreeGrafter"/>
</dbReference>
<dbReference type="GO" id="GO:0019843">
    <property type="term" value="F:rRNA binding"/>
    <property type="evidence" value="ECO:0007669"/>
    <property type="project" value="UniProtKB-UniRule"/>
</dbReference>
<dbReference type="GO" id="GO:0003735">
    <property type="term" value="F:structural constituent of ribosome"/>
    <property type="evidence" value="ECO:0007669"/>
    <property type="project" value="InterPro"/>
</dbReference>
<dbReference type="GO" id="GO:0002181">
    <property type="term" value="P:cytoplasmic translation"/>
    <property type="evidence" value="ECO:0007669"/>
    <property type="project" value="TreeGrafter"/>
</dbReference>
<dbReference type="FunFam" id="3.90.930.12:FF:000001">
    <property type="entry name" value="50S ribosomal protein L6"/>
    <property type="match status" value="1"/>
</dbReference>
<dbReference type="Gene3D" id="3.90.930.12">
    <property type="entry name" value="Ribosomal protein L6, alpha-beta domain"/>
    <property type="match status" value="2"/>
</dbReference>
<dbReference type="HAMAP" id="MF_01365_B">
    <property type="entry name" value="Ribosomal_uL6_B"/>
    <property type="match status" value="1"/>
</dbReference>
<dbReference type="InterPro" id="IPR000702">
    <property type="entry name" value="Ribosomal_uL6-like"/>
</dbReference>
<dbReference type="InterPro" id="IPR036789">
    <property type="entry name" value="Ribosomal_uL6-like_a/b-dom_sf"/>
</dbReference>
<dbReference type="InterPro" id="IPR020040">
    <property type="entry name" value="Ribosomal_uL6_a/b-dom"/>
</dbReference>
<dbReference type="InterPro" id="IPR019906">
    <property type="entry name" value="Ribosomal_uL6_bac-type"/>
</dbReference>
<dbReference type="InterPro" id="IPR002358">
    <property type="entry name" value="Ribosomal_uL6_CS"/>
</dbReference>
<dbReference type="NCBIfam" id="TIGR03654">
    <property type="entry name" value="L6_bact"/>
    <property type="match status" value="1"/>
</dbReference>
<dbReference type="PANTHER" id="PTHR11655">
    <property type="entry name" value="60S/50S RIBOSOMAL PROTEIN L6/L9"/>
    <property type="match status" value="1"/>
</dbReference>
<dbReference type="PANTHER" id="PTHR11655:SF14">
    <property type="entry name" value="LARGE RIBOSOMAL SUBUNIT PROTEIN UL6M"/>
    <property type="match status" value="1"/>
</dbReference>
<dbReference type="Pfam" id="PF00347">
    <property type="entry name" value="Ribosomal_L6"/>
    <property type="match status" value="2"/>
</dbReference>
<dbReference type="PIRSF" id="PIRSF002162">
    <property type="entry name" value="Ribosomal_L6"/>
    <property type="match status" value="1"/>
</dbReference>
<dbReference type="PRINTS" id="PR00059">
    <property type="entry name" value="RIBOSOMALL6"/>
</dbReference>
<dbReference type="SUPFAM" id="SSF56053">
    <property type="entry name" value="Ribosomal protein L6"/>
    <property type="match status" value="2"/>
</dbReference>
<dbReference type="PROSITE" id="PS00525">
    <property type="entry name" value="RIBOSOMAL_L6_1"/>
    <property type="match status" value="1"/>
</dbReference>
<sequence>MSRIGKQPIAIPAGVEVKLEGNLLKFKKGNLAKELDTKANVNVEIKDNNILFSPKGEDRQSRAYWGTYRALAYNIVVGLTQGFSKTLEINGVGYKAALKGKVLELSLGFSHPINYDIPEGIEIVVDKNTIAVKGSDKQVVGQVAAQIREFRPPEPYKGKGVKYSDERIIRKAGKTSKK</sequence>
<evidence type="ECO:0000255" key="1">
    <source>
        <dbReference type="HAMAP-Rule" id="MF_01365"/>
    </source>
</evidence>
<evidence type="ECO:0000305" key="2"/>
<comment type="function">
    <text evidence="1">This protein binds to the 23S rRNA, and is important in its secondary structure. It is located near the subunit interface in the base of the L7/L12 stalk, and near the tRNA binding site of the peptidyltransferase center.</text>
</comment>
<comment type="subunit">
    <text evidence="1">Part of the 50S ribosomal subunit.</text>
</comment>
<comment type="similarity">
    <text evidence="1">Belongs to the universal ribosomal protein uL6 family.</text>
</comment>
<organism>
    <name type="scientific">Campylobacter jejuni (strain RM1221)</name>
    <dbReference type="NCBI Taxonomy" id="195099"/>
    <lineage>
        <taxon>Bacteria</taxon>
        <taxon>Pseudomonadati</taxon>
        <taxon>Campylobacterota</taxon>
        <taxon>Epsilonproteobacteria</taxon>
        <taxon>Campylobacterales</taxon>
        <taxon>Campylobacteraceae</taxon>
        <taxon>Campylobacter</taxon>
    </lineage>
</organism>
<name>RL6_CAMJR</name>
<keyword id="KW-0687">Ribonucleoprotein</keyword>
<keyword id="KW-0689">Ribosomal protein</keyword>
<keyword id="KW-0694">RNA-binding</keyword>
<keyword id="KW-0699">rRNA-binding</keyword>
<gene>
    <name evidence="1" type="primary">rplF</name>
    <name type="ordered locus">CJE1860</name>
</gene>
<accession>Q5HSA5</accession>